<proteinExistence type="inferred from homology"/>
<comment type="function">
    <text evidence="1">NDH-1 shuttles electrons from NADH, via FMN and iron-sulfur (Fe-S) centers, to quinones in the respiratory chain. The immediate electron acceptor for the enzyme in this species is believed to be ubiquinone. Couples the redox reaction to proton translocation (for every two electrons transferred, four hydrogen ions are translocated across the cytoplasmic membrane), and thus conserves the redox energy in a proton gradient. This subunit may bind ubiquinone.</text>
</comment>
<comment type="catalytic activity">
    <reaction evidence="1">
        <text>a quinone + NADH + 5 H(+)(in) = a quinol + NAD(+) + 4 H(+)(out)</text>
        <dbReference type="Rhea" id="RHEA:57888"/>
        <dbReference type="ChEBI" id="CHEBI:15378"/>
        <dbReference type="ChEBI" id="CHEBI:24646"/>
        <dbReference type="ChEBI" id="CHEBI:57540"/>
        <dbReference type="ChEBI" id="CHEBI:57945"/>
        <dbReference type="ChEBI" id="CHEBI:132124"/>
    </reaction>
</comment>
<comment type="subunit">
    <text evidence="1">NDH-1 is composed of 14 different subunits. Subunits NuoA, H, J, K, L, M, N constitute the membrane sector of the complex.</text>
</comment>
<comment type="subcellular location">
    <subcellularLocation>
        <location evidence="1">Cell inner membrane</location>
        <topology evidence="1">Multi-pass membrane protein</topology>
    </subcellularLocation>
</comment>
<comment type="similarity">
    <text evidence="1">Belongs to the complex I subunit 1 family.</text>
</comment>
<sequence length="363" mass="40541">MNELLLNLVDPLHQWFLGLGDGGVVLWSVLKILLIAVPVIVSVAFYVVWERKLIGWMHVRHGPMYVGMGIFQAFADVFKLLFKEILQPSSSHKAMFIIAPLLTLAPAFAAWSVVPFDAKLVLSNANVGLLYLLAMTSLGVYGIILAGWASNSKYAFLGAMRSAAQVVSYEIAMGFALVGVMIASGSVNLSQIVFAQAGNSGFFDWFLIPLFPLFIVYWVSGVAETNRAPFDVVEGESEIVAGHMVEYSGGAFALFFLAEYANMILVSFLISIFFFGGWLSPIQGWVNADISPWIDWLWKGGWPWLLMKVFFFASAYIWFRASFPRYRYDQIMRLGWKVFIPLTIVWIAVTALMVFYGVIQKGV</sequence>
<keyword id="KW-0997">Cell inner membrane</keyword>
<keyword id="KW-1003">Cell membrane</keyword>
<keyword id="KW-0472">Membrane</keyword>
<keyword id="KW-0520">NAD</keyword>
<keyword id="KW-0874">Quinone</keyword>
<keyword id="KW-1278">Translocase</keyword>
<keyword id="KW-0812">Transmembrane</keyword>
<keyword id="KW-1133">Transmembrane helix</keyword>
<keyword id="KW-0830">Ubiquinone</keyword>
<organism>
    <name type="scientific">Xanthomonas oryzae pv. oryzae (strain MAFF 311018)</name>
    <dbReference type="NCBI Taxonomy" id="342109"/>
    <lineage>
        <taxon>Bacteria</taxon>
        <taxon>Pseudomonadati</taxon>
        <taxon>Pseudomonadota</taxon>
        <taxon>Gammaproteobacteria</taxon>
        <taxon>Lysobacterales</taxon>
        <taxon>Lysobacteraceae</taxon>
        <taxon>Xanthomonas</taxon>
    </lineage>
</organism>
<feature type="chain" id="PRO_0000244965" description="NADH-quinone oxidoreductase subunit H">
    <location>
        <begin position="1"/>
        <end position="363"/>
    </location>
</feature>
<feature type="transmembrane region" description="Helical" evidence="1">
    <location>
        <begin position="29"/>
        <end position="49"/>
    </location>
</feature>
<feature type="transmembrane region" description="Helical" evidence="1">
    <location>
        <begin position="62"/>
        <end position="82"/>
    </location>
</feature>
<feature type="transmembrane region" description="Helical" evidence="1">
    <location>
        <begin position="96"/>
        <end position="116"/>
    </location>
</feature>
<feature type="transmembrane region" description="Helical" evidence="1">
    <location>
        <begin position="127"/>
        <end position="147"/>
    </location>
</feature>
<feature type="transmembrane region" description="Helical" evidence="1">
    <location>
        <begin position="163"/>
        <end position="183"/>
    </location>
</feature>
<feature type="transmembrane region" description="Helical" evidence="1">
    <location>
        <begin position="202"/>
        <end position="222"/>
    </location>
</feature>
<feature type="transmembrane region" description="Helical" evidence="1">
    <location>
        <begin position="238"/>
        <end position="257"/>
    </location>
</feature>
<feature type="transmembrane region" description="Helical" evidence="1">
    <location>
        <begin position="278"/>
        <end position="298"/>
    </location>
</feature>
<feature type="transmembrane region" description="Helical" evidence="1">
    <location>
        <begin position="299"/>
        <end position="319"/>
    </location>
</feature>
<feature type="transmembrane region" description="Helical" evidence="1">
    <location>
        <begin position="339"/>
        <end position="359"/>
    </location>
</feature>
<reference key="1">
    <citation type="journal article" date="2005" name="Jpn. Agric. Res. Q.">
        <title>Genome sequence of Xanthomonas oryzae pv. oryzae suggests contribution of large numbers of effector genes and insertion sequences to its race diversity.</title>
        <authorList>
            <person name="Ochiai H."/>
            <person name="Inoue Y."/>
            <person name="Takeya M."/>
            <person name="Sasaki A."/>
            <person name="Kaku H."/>
        </authorList>
    </citation>
    <scope>NUCLEOTIDE SEQUENCE [LARGE SCALE GENOMIC DNA]</scope>
    <source>
        <strain>MAFF 311018</strain>
    </source>
</reference>
<accession>Q2P0W2</accession>
<protein>
    <recommendedName>
        <fullName evidence="1">NADH-quinone oxidoreductase subunit H</fullName>
        <ecNumber evidence="1">7.1.1.-</ecNumber>
    </recommendedName>
    <alternativeName>
        <fullName evidence="1">NADH dehydrogenase I subunit H</fullName>
    </alternativeName>
    <alternativeName>
        <fullName evidence="1">NDH-1 subunit H</fullName>
    </alternativeName>
</protein>
<gene>
    <name evidence="1" type="primary">nuoH</name>
    <name type="synonym">nqo8</name>
    <name type="ordered locus">XOO3060</name>
</gene>
<dbReference type="EC" id="7.1.1.-" evidence="1"/>
<dbReference type="EMBL" id="AP008229">
    <property type="protein sequence ID" value="BAE69815.1"/>
    <property type="molecule type" value="Genomic_DNA"/>
</dbReference>
<dbReference type="RefSeq" id="WP_011409058.1">
    <property type="nucleotide sequence ID" value="NC_007705.1"/>
</dbReference>
<dbReference type="SMR" id="Q2P0W2"/>
<dbReference type="KEGG" id="xom:XOO3060"/>
<dbReference type="HOGENOM" id="CLU_015134_0_1_6"/>
<dbReference type="GO" id="GO:0005886">
    <property type="term" value="C:plasma membrane"/>
    <property type="evidence" value="ECO:0007669"/>
    <property type="project" value="UniProtKB-SubCell"/>
</dbReference>
<dbReference type="GO" id="GO:0003954">
    <property type="term" value="F:NADH dehydrogenase activity"/>
    <property type="evidence" value="ECO:0007669"/>
    <property type="project" value="TreeGrafter"/>
</dbReference>
<dbReference type="GO" id="GO:0016655">
    <property type="term" value="F:oxidoreductase activity, acting on NAD(P)H, quinone or similar compound as acceptor"/>
    <property type="evidence" value="ECO:0007669"/>
    <property type="project" value="UniProtKB-UniRule"/>
</dbReference>
<dbReference type="GO" id="GO:0048038">
    <property type="term" value="F:quinone binding"/>
    <property type="evidence" value="ECO:0007669"/>
    <property type="project" value="UniProtKB-KW"/>
</dbReference>
<dbReference type="GO" id="GO:0009060">
    <property type="term" value="P:aerobic respiration"/>
    <property type="evidence" value="ECO:0007669"/>
    <property type="project" value="TreeGrafter"/>
</dbReference>
<dbReference type="HAMAP" id="MF_01350">
    <property type="entry name" value="NDH1_NuoH"/>
    <property type="match status" value="1"/>
</dbReference>
<dbReference type="InterPro" id="IPR001694">
    <property type="entry name" value="NADH_UbQ_OxRdtase_su1/FPO"/>
</dbReference>
<dbReference type="InterPro" id="IPR018086">
    <property type="entry name" value="NADH_UbQ_OxRdtase_su1_CS"/>
</dbReference>
<dbReference type="NCBIfam" id="NF004741">
    <property type="entry name" value="PRK06076.1-2"/>
    <property type="match status" value="1"/>
</dbReference>
<dbReference type="NCBIfam" id="NF004742">
    <property type="entry name" value="PRK06076.1-3"/>
    <property type="match status" value="1"/>
</dbReference>
<dbReference type="PANTHER" id="PTHR11432">
    <property type="entry name" value="NADH DEHYDROGENASE SUBUNIT 1"/>
    <property type="match status" value="1"/>
</dbReference>
<dbReference type="PANTHER" id="PTHR11432:SF3">
    <property type="entry name" value="NADH-UBIQUINONE OXIDOREDUCTASE CHAIN 1"/>
    <property type="match status" value="1"/>
</dbReference>
<dbReference type="Pfam" id="PF00146">
    <property type="entry name" value="NADHdh"/>
    <property type="match status" value="1"/>
</dbReference>
<dbReference type="PROSITE" id="PS00668">
    <property type="entry name" value="COMPLEX1_ND1_2"/>
    <property type="match status" value="1"/>
</dbReference>
<name>NUOH_XANOM</name>
<evidence type="ECO:0000255" key="1">
    <source>
        <dbReference type="HAMAP-Rule" id="MF_01350"/>
    </source>
</evidence>